<dbReference type="EMBL" id="CM002236">
    <property type="protein sequence ID" value="EAA34869.1"/>
    <property type="molecule type" value="Genomic_DNA"/>
</dbReference>
<dbReference type="RefSeq" id="XP_964105.1">
    <property type="nucleotide sequence ID" value="XM_959012.2"/>
</dbReference>
<dbReference type="SMR" id="Q7SDM3"/>
<dbReference type="FunCoup" id="Q7SDM3">
    <property type="interactions" value="308"/>
</dbReference>
<dbReference type="STRING" id="367110.Q7SDM3"/>
<dbReference type="PaxDb" id="5141-EFNCRP00000001310"/>
<dbReference type="EnsemblFungi" id="EAA34869">
    <property type="protein sequence ID" value="EAA34869"/>
    <property type="gene ID" value="NCU02111"/>
</dbReference>
<dbReference type="GeneID" id="3880254"/>
<dbReference type="KEGG" id="ncr:NCU02111"/>
<dbReference type="VEuPathDB" id="FungiDB:NCU02111"/>
<dbReference type="HOGENOM" id="CLU_000192_7_6_1"/>
<dbReference type="InParanoid" id="Q7SDM3"/>
<dbReference type="OrthoDB" id="6108017at2759"/>
<dbReference type="Proteomes" id="UP000001805">
    <property type="component" value="Chromosome 1, Linkage Group I"/>
</dbReference>
<dbReference type="GO" id="GO:0030479">
    <property type="term" value="C:actin cortical patch"/>
    <property type="evidence" value="ECO:0000318"/>
    <property type="project" value="GO_Central"/>
</dbReference>
<dbReference type="GO" id="GO:0015629">
    <property type="term" value="C:actin cytoskeleton"/>
    <property type="evidence" value="ECO:0000318"/>
    <property type="project" value="GO_Central"/>
</dbReference>
<dbReference type="GO" id="GO:0051285">
    <property type="term" value="C:cell cortex of cell tip"/>
    <property type="evidence" value="ECO:0007669"/>
    <property type="project" value="EnsemblFungi"/>
</dbReference>
<dbReference type="GO" id="GO:0051286">
    <property type="term" value="C:cell tip"/>
    <property type="evidence" value="ECO:0000318"/>
    <property type="project" value="GO_Central"/>
</dbReference>
<dbReference type="GO" id="GO:0005737">
    <property type="term" value="C:cytoplasm"/>
    <property type="evidence" value="ECO:0000318"/>
    <property type="project" value="GO_Central"/>
</dbReference>
<dbReference type="GO" id="GO:0043332">
    <property type="term" value="C:mating projection tip"/>
    <property type="evidence" value="ECO:0007669"/>
    <property type="project" value="EnsemblFungi"/>
</dbReference>
<dbReference type="GO" id="GO:0031097">
    <property type="term" value="C:medial cortex"/>
    <property type="evidence" value="ECO:0007669"/>
    <property type="project" value="EnsemblFungi"/>
</dbReference>
<dbReference type="GO" id="GO:0045160">
    <property type="term" value="C:myosin I complex"/>
    <property type="evidence" value="ECO:0007669"/>
    <property type="project" value="EnsemblFungi"/>
</dbReference>
<dbReference type="GO" id="GO:0005886">
    <property type="term" value="C:plasma membrane"/>
    <property type="evidence" value="ECO:0000318"/>
    <property type="project" value="GO_Central"/>
</dbReference>
<dbReference type="GO" id="GO:0044853">
    <property type="term" value="C:plasma membrane raft"/>
    <property type="evidence" value="ECO:0007669"/>
    <property type="project" value="EnsemblFungi"/>
</dbReference>
<dbReference type="GO" id="GO:0005628">
    <property type="term" value="C:prospore membrane"/>
    <property type="evidence" value="ECO:0007669"/>
    <property type="project" value="EnsemblFungi"/>
</dbReference>
<dbReference type="GO" id="GO:0051015">
    <property type="term" value="F:actin filament binding"/>
    <property type="evidence" value="ECO:0000318"/>
    <property type="project" value="GO_Central"/>
</dbReference>
<dbReference type="GO" id="GO:0071933">
    <property type="term" value="F:Arp2/3 complex binding"/>
    <property type="evidence" value="ECO:0007669"/>
    <property type="project" value="EnsemblFungi"/>
</dbReference>
<dbReference type="GO" id="GO:0005524">
    <property type="term" value="F:ATP binding"/>
    <property type="evidence" value="ECO:0007669"/>
    <property type="project" value="UniProtKB-KW"/>
</dbReference>
<dbReference type="GO" id="GO:0016787">
    <property type="term" value="F:hydrolase activity"/>
    <property type="evidence" value="ECO:0007669"/>
    <property type="project" value="UniProtKB-KW"/>
</dbReference>
<dbReference type="GO" id="GO:0000146">
    <property type="term" value="F:microfilament motor activity"/>
    <property type="evidence" value="ECO:0000318"/>
    <property type="project" value="GO_Central"/>
</dbReference>
<dbReference type="GO" id="GO:0000147">
    <property type="term" value="P:actin cortical patch assembly"/>
    <property type="evidence" value="ECO:0007669"/>
    <property type="project" value="EnsemblFungi"/>
</dbReference>
<dbReference type="GO" id="GO:0051666">
    <property type="term" value="P:actin cortical patch localization"/>
    <property type="evidence" value="ECO:0000318"/>
    <property type="project" value="GO_Central"/>
</dbReference>
<dbReference type="GO" id="GO:0007015">
    <property type="term" value="P:actin filament organization"/>
    <property type="evidence" value="ECO:0000318"/>
    <property type="project" value="GO_Central"/>
</dbReference>
<dbReference type="GO" id="GO:0006897">
    <property type="term" value="P:endocytosis"/>
    <property type="evidence" value="ECO:0000318"/>
    <property type="project" value="GO_Central"/>
</dbReference>
<dbReference type="GO" id="GO:0000281">
    <property type="term" value="P:mitotic cytokinesis"/>
    <property type="evidence" value="ECO:0007669"/>
    <property type="project" value="EnsemblFungi"/>
</dbReference>
<dbReference type="CDD" id="cd01378">
    <property type="entry name" value="MYSc_Myo1"/>
    <property type="match status" value="1"/>
</dbReference>
<dbReference type="CDD" id="cd11858">
    <property type="entry name" value="SH3_Myosin-I_fungi"/>
    <property type="match status" value="1"/>
</dbReference>
<dbReference type="FunFam" id="1.10.10.820:FF:000001">
    <property type="entry name" value="Myosin heavy chain"/>
    <property type="match status" value="1"/>
</dbReference>
<dbReference type="FunFam" id="1.20.5.4820:FF:000004">
    <property type="entry name" value="Myosin IE"/>
    <property type="match status" value="1"/>
</dbReference>
<dbReference type="FunFam" id="1.20.58.530:FF:000007">
    <property type="entry name" value="Myosin IE"/>
    <property type="match status" value="1"/>
</dbReference>
<dbReference type="Gene3D" id="1.10.10.820">
    <property type="match status" value="1"/>
</dbReference>
<dbReference type="Gene3D" id="1.20.5.4820">
    <property type="match status" value="1"/>
</dbReference>
<dbReference type="Gene3D" id="1.20.58.530">
    <property type="match status" value="1"/>
</dbReference>
<dbReference type="Gene3D" id="3.40.850.10">
    <property type="entry name" value="Kinesin motor domain"/>
    <property type="match status" value="1"/>
</dbReference>
<dbReference type="Gene3D" id="1.20.120.720">
    <property type="entry name" value="Myosin VI head, motor domain, U50 subdomain"/>
    <property type="match status" value="1"/>
</dbReference>
<dbReference type="Gene3D" id="2.30.30.40">
    <property type="entry name" value="SH3 Domains"/>
    <property type="match status" value="1"/>
</dbReference>
<dbReference type="InterPro" id="IPR035535">
    <property type="entry name" value="Fungal_myosin-I_SH3"/>
</dbReference>
<dbReference type="InterPro" id="IPR036961">
    <property type="entry name" value="Kinesin_motor_dom_sf"/>
</dbReference>
<dbReference type="InterPro" id="IPR001609">
    <property type="entry name" value="Myosin_head_motor_dom-like"/>
</dbReference>
<dbReference type="InterPro" id="IPR010926">
    <property type="entry name" value="Myosin_TH1"/>
</dbReference>
<dbReference type="InterPro" id="IPR036072">
    <property type="entry name" value="MYSc_Myo1"/>
</dbReference>
<dbReference type="InterPro" id="IPR027417">
    <property type="entry name" value="P-loop_NTPase"/>
</dbReference>
<dbReference type="InterPro" id="IPR036028">
    <property type="entry name" value="SH3-like_dom_sf"/>
</dbReference>
<dbReference type="InterPro" id="IPR001452">
    <property type="entry name" value="SH3_domain"/>
</dbReference>
<dbReference type="PANTHER" id="PTHR13140">
    <property type="entry name" value="MYOSIN"/>
    <property type="match status" value="1"/>
</dbReference>
<dbReference type="PANTHER" id="PTHR13140:SF837">
    <property type="entry name" value="MYOSIN-3-RELATED"/>
    <property type="match status" value="1"/>
</dbReference>
<dbReference type="Pfam" id="PF00063">
    <property type="entry name" value="Myosin_head"/>
    <property type="match status" value="1"/>
</dbReference>
<dbReference type="Pfam" id="PF06017">
    <property type="entry name" value="Myosin_TH1"/>
    <property type="match status" value="1"/>
</dbReference>
<dbReference type="Pfam" id="PF00018">
    <property type="entry name" value="SH3_1"/>
    <property type="match status" value="1"/>
</dbReference>
<dbReference type="PRINTS" id="PR00193">
    <property type="entry name" value="MYOSINHEAVY"/>
</dbReference>
<dbReference type="SMART" id="SM00242">
    <property type="entry name" value="MYSc"/>
    <property type="match status" value="1"/>
</dbReference>
<dbReference type="SMART" id="SM00326">
    <property type="entry name" value="SH3"/>
    <property type="match status" value="1"/>
</dbReference>
<dbReference type="SUPFAM" id="SSF52540">
    <property type="entry name" value="P-loop containing nucleoside triphosphate hydrolases"/>
    <property type="match status" value="1"/>
</dbReference>
<dbReference type="SUPFAM" id="SSF50044">
    <property type="entry name" value="SH3-domain"/>
    <property type="match status" value="1"/>
</dbReference>
<dbReference type="PROSITE" id="PS51456">
    <property type="entry name" value="MYOSIN_MOTOR"/>
    <property type="match status" value="1"/>
</dbReference>
<dbReference type="PROSITE" id="PS50002">
    <property type="entry name" value="SH3"/>
    <property type="match status" value="1"/>
</dbReference>
<dbReference type="PROSITE" id="PS51757">
    <property type="entry name" value="TH1"/>
    <property type="match status" value="1"/>
</dbReference>
<name>MYO1_NEUCR</name>
<proteinExistence type="inferred from homology"/>
<gene>
    <name type="primary">myo-1</name>
    <name type="ORF">NCU02111</name>
</gene>
<feature type="chain" id="PRO_0000338558" description="Myosin-1">
    <location>
        <begin position="1"/>
        <end position="1235"/>
    </location>
</feature>
<feature type="domain" description="Myosin motor" evidence="4">
    <location>
        <begin position="41"/>
        <end position="715"/>
    </location>
</feature>
<feature type="domain" description="IQ 1">
    <location>
        <begin position="719"/>
        <end position="739"/>
    </location>
</feature>
<feature type="domain" description="IQ 2">
    <location>
        <begin position="740"/>
        <end position="765"/>
    </location>
</feature>
<feature type="domain" description="TH1" evidence="5">
    <location>
        <begin position="773"/>
        <end position="962"/>
    </location>
</feature>
<feature type="domain" description="SH3" evidence="3">
    <location>
        <begin position="1075"/>
        <end position="1134"/>
    </location>
</feature>
<feature type="region of interest" description="Disordered" evidence="6">
    <location>
        <begin position="1"/>
        <end position="34"/>
    </location>
</feature>
<feature type="region of interest" description="Actin-binding" evidence="1">
    <location>
        <begin position="405"/>
        <end position="487"/>
    </location>
</feature>
<feature type="region of interest" description="Disordered" evidence="6">
    <location>
        <begin position="949"/>
        <end position="1076"/>
    </location>
</feature>
<feature type="region of interest" description="Disordered" evidence="6">
    <location>
        <begin position="1135"/>
        <end position="1235"/>
    </location>
</feature>
<feature type="compositionally biased region" description="Basic and acidic residues" evidence="6">
    <location>
        <begin position="9"/>
        <end position="19"/>
    </location>
</feature>
<feature type="compositionally biased region" description="Low complexity" evidence="6">
    <location>
        <begin position="982"/>
        <end position="1046"/>
    </location>
</feature>
<feature type="compositionally biased region" description="Polar residues" evidence="6">
    <location>
        <begin position="1050"/>
        <end position="1062"/>
    </location>
</feature>
<feature type="compositionally biased region" description="Pro residues" evidence="6">
    <location>
        <begin position="1063"/>
        <end position="1073"/>
    </location>
</feature>
<feature type="compositionally biased region" description="Pro residues" evidence="6">
    <location>
        <begin position="1135"/>
        <end position="1150"/>
    </location>
</feature>
<feature type="compositionally biased region" description="Polar residues" evidence="6">
    <location>
        <begin position="1180"/>
        <end position="1210"/>
    </location>
</feature>
<feature type="binding site" evidence="2">
    <location>
        <begin position="134"/>
        <end position="141"/>
    </location>
    <ligand>
        <name>ATP</name>
        <dbReference type="ChEBI" id="CHEBI:30616"/>
    </ligand>
</feature>
<sequence>MGITKRSKDKAARAERSAGGDKSSSAKPKKATFDTTKKKEIGVSDLTLLSKVSNEAINENLKKRFEGREIYTYIGHVLVSVNPFRDLGIYTDQVLESYKGKNRLEMPPHVFAIAESAYYNMKAYSENQCVIISGESGAGKTEAAKRIMQYIANVSGGGSGDIQQIKDMVLATNPLLESFGNAKTLRNNNSSRFGKYLQIHFNAQGEPIGADITNYLLEKSRVVGQIANERNFHIFYQFTKGASQQYREMYGIQKPETYLYTSKAKCFDVDGIDDLAEYQDTLNAMKIIGLSQQEQDNIFRMLSAILWAGNLVFKEGDDGYAAVSDQSVVDFLAYLLEVDPAQLVHALTIRILTPRPGEVIESPANVPQATATRDALAMAIYYNLFDWIVERINLSLKARQATTNSIGILDIYGFEIFEKNSFEQLCINYVNEKLQQIFIQLTLKAEQDEYAREQIKWTPIKYFDNKIVCDLIESTRPPGIFSAMKDATKTAHADPAASDRTFMQSINGMSNPHLTPRQGAFIVKHYAGDVTYSVDGITDKNKDLLLKGVQNLFQASQNQFVHTLFPQQVDLDNRRQPPSAGDRIRTSANALVDTLMKCQPSYIRTIKPNENKSPTEYNEPNVLHQVKYLGLQENVRIRRAGFAYRQSFEKFVDRFFLLSPATSYAGEYTWTGSYEAATKQILKDTSIPQEEWQLGVTKAFIKSPETLFALEHMRDRYWHNMATRIQRMWRAYLAYRAEAAIRIQRIWRKKRVGAEYLQLREEGHKVLGGRKERRRMSILGSRRFLGDYLGINATTGPGAQIRNAIGIGSNEKAVFSCRGELLEHKFGRSSKPSPRILVVTNSKFYIVAQVLNQGHVQIMAEKAFPLASIKFIGASTARDDWFSLGVGSQQEPDPLLNCVLKTEMFTQMKRVMPGSFNLKIGDAIEYAKKPGKMQLVKVLKDAPTSQDFYKSSTVHTQPGEPPNSVSRPQPKAKPVPPRPITKGKLIKPGGPGGRPARNANPNRTAQPRPGGGPSIAASNPLASSAAAASSRPVPAHPGAAATPAAAKSLPSHTRQQSSTSTVRPPPPPPPAPAAKPKIMAKVLYDFAGTRENELSIKAGDMIEIVQKENNGWWLAKTPEGQAWVPAAYVEEQAPAPPVVAPRPPPPPPPAANGGGRVAPQPPAKRPVAGRKPAPAPAVASLQNRDSGMSLNGANGSGSDASRSSTPTPSIAGSLADALKARKQAMAKRDDDEDDW</sequence>
<comment type="function">
    <text evidence="1">Type-I myosin implicated in the organization of the actin cytoskeleton. Required for proper actin cytoskeleton polarization. At the cell cortex, assembles in patch-like structures together with proteins from the actin-polymerizing machinery and promotes actin assembly. Functions as actin nucleation-promoting factor (NPF) for the Arp2/3 complex (By similarity).</text>
</comment>
<comment type="subcellular location">
    <subcellularLocation>
        <location evidence="1">Cytoplasm</location>
        <location evidence="1">Cytoskeleton</location>
        <location evidence="1">Actin patch</location>
    </subcellularLocation>
</comment>
<comment type="domain">
    <text evidence="1">The myosin motor domain displays actin-stimulated ATPase activity and generates a mechanochemical force.</text>
</comment>
<comment type="domain">
    <text evidence="1">The tail domain participates in molecular interactions that specify the role of the motor domain (By similarity). It is composed of several tail homology (TH) domains, namely a putative phospholipid-binding myosin tail domain (also named TH1), an Ala- and Pro-rich domain (TH2), followed by an SH3 domain and a C-terminal acidic domain (TH3).</text>
</comment>
<comment type="similarity">
    <text evidence="7">Belongs to the TRAFAC class myosin-kinesin ATPase superfamily. Myosin family.</text>
</comment>
<evidence type="ECO:0000250" key="1"/>
<evidence type="ECO:0000255" key="2"/>
<evidence type="ECO:0000255" key="3">
    <source>
        <dbReference type="PROSITE-ProRule" id="PRU00192"/>
    </source>
</evidence>
<evidence type="ECO:0000255" key="4">
    <source>
        <dbReference type="PROSITE-ProRule" id="PRU00782"/>
    </source>
</evidence>
<evidence type="ECO:0000255" key="5">
    <source>
        <dbReference type="PROSITE-ProRule" id="PRU01093"/>
    </source>
</evidence>
<evidence type="ECO:0000256" key="6">
    <source>
        <dbReference type="SAM" id="MobiDB-lite"/>
    </source>
</evidence>
<evidence type="ECO:0000305" key="7"/>
<protein>
    <recommendedName>
        <fullName>Myosin-1</fullName>
    </recommendedName>
    <alternativeName>
        <fullName>Class I unconventional myosin</fullName>
    </alternativeName>
    <alternativeName>
        <fullName>Type I myosin</fullName>
    </alternativeName>
</protein>
<keyword id="KW-0009">Actin-binding</keyword>
<keyword id="KW-0067">ATP-binding</keyword>
<keyword id="KW-0963">Cytoplasm</keyword>
<keyword id="KW-0206">Cytoskeleton</keyword>
<keyword id="KW-0378">Hydrolase</keyword>
<keyword id="KW-0505">Motor protein</keyword>
<keyword id="KW-0518">Myosin</keyword>
<keyword id="KW-0547">Nucleotide-binding</keyword>
<keyword id="KW-1185">Reference proteome</keyword>
<keyword id="KW-0677">Repeat</keyword>
<keyword id="KW-0728">SH3 domain</keyword>
<accession>Q7SDM3</accession>
<organism>
    <name type="scientific">Neurospora crassa (strain ATCC 24698 / 74-OR23-1A / CBS 708.71 / DSM 1257 / FGSC 987)</name>
    <dbReference type="NCBI Taxonomy" id="367110"/>
    <lineage>
        <taxon>Eukaryota</taxon>
        <taxon>Fungi</taxon>
        <taxon>Dikarya</taxon>
        <taxon>Ascomycota</taxon>
        <taxon>Pezizomycotina</taxon>
        <taxon>Sordariomycetes</taxon>
        <taxon>Sordariomycetidae</taxon>
        <taxon>Sordariales</taxon>
        <taxon>Sordariaceae</taxon>
        <taxon>Neurospora</taxon>
    </lineage>
</organism>
<reference key="1">
    <citation type="journal article" date="2003" name="Nature">
        <title>The genome sequence of the filamentous fungus Neurospora crassa.</title>
        <authorList>
            <person name="Galagan J.E."/>
            <person name="Calvo S.E."/>
            <person name="Borkovich K.A."/>
            <person name="Selker E.U."/>
            <person name="Read N.D."/>
            <person name="Jaffe D.B."/>
            <person name="FitzHugh W."/>
            <person name="Ma L.-J."/>
            <person name="Smirnov S."/>
            <person name="Purcell S."/>
            <person name="Rehman B."/>
            <person name="Elkins T."/>
            <person name="Engels R."/>
            <person name="Wang S."/>
            <person name="Nielsen C.B."/>
            <person name="Butler J."/>
            <person name="Endrizzi M."/>
            <person name="Qui D."/>
            <person name="Ianakiev P."/>
            <person name="Bell-Pedersen D."/>
            <person name="Nelson M.A."/>
            <person name="Werner-Washburne M."/>
            <person name="Selitrennikoff C.P."/>
            <person name="Kinsey J.A."/>
            <person name="Braun E.L."/>
            <person name="Zelter A."/>
            <person name="Schulte U."/>
            <person name="Kothe G.O."/>
            <person name="Jedd G."/>
            <person name="Mewes H.-W."/>
            <person name="Staben C."/>
            <person name="Marcotte E."/>
            <person name="Greenberg D."/>
            <person name="Roy A."/>
            <person name="Foley K."/>
            <person name="Naylor J."/>
            <person name="Stange-Thomann N."/>
            <person name="Barrett R."/>
            <person name="Gnerre S."/>
            <person name="Kamal M."/>
            <person name="Kamvysselis M."/>
            <person name="Mauceli E.W."/>
            <person name="Bielke C."/>
            <person name="Rudd S."/>
            <person name="Frishman D."/>
            <person name="Krystofova S."/>
            <person name="Rasmussen C."/>
            <person name="Metzenberg R.L."/>
            <person name="Perkins D.D."/>
            <person name="Kroken S."/>
            <person name="Cogoni C."/>
            <person name="Macino G."/>
            <person name="Catcheside D.E.A."/>
            <person name="Li W."/>
            <person name="Pratt R.J."/>
            <person name="Osmani S.A."/>
            <person name="DeSouza C.P.C."/>
            <person name="Glass N.L."/>
            <person name="Orbach M.J."/>
            <person name="Berglund J.A."/>
            <person name="Voelker R."/>
            <person name="Yarden O."/>
            <person name="Plamann M."/>
            <person name="Seiler S."/>
            <person name="Dunlap J.C."/>
            <person name="Radford A."/>
            <person name="Aramayo R."/>
            <person name="Natvig D.O."/>
            <person name="Alex L.A."/>
            <person name="Mannhaupt G."/>
            <person name="Ebbole D.J."/>
            <person name="Freitag M."/>
            <person name="Paulsen I."/>
            <person name="Sachs M.S."/>
            <person name="Lander E.S."/>
            <person name="Nusbaum C."/>
            <person name="Birren B.W."/>
        </authorList>
    </citation>
    <scope>NUCLEOTIDE SEQUENCE [LARGE SCALE GENOMIC DNA]</scope>
    <source>
        <strain>ATCC 24698 / 74-OR23-1A / CBS 708.71 / DSM 1257 / FGSC 987</strain>
    </source>
</reference>